<dbReference type="EC" id="3.6.5.3" evidence="2"/>
<dbReference type="EMBL" id="CP000038">
    <property type="protein sequence ID" value="AAZ90029.1"/>
    <property type="molecule type" value="Genomic_DNA"/>
</dbReference>
<dbReference type="SMR" id="Q3YWT3"/>
<dbReference type="KEGG" id="ssn:SSON_3469"/>
<dbReference type="HOGENOM" id="CLU_007265_0_2_6"/>
<dbReference type="Proteomes" id="UP000002529">
    <property type="component" value="Chromosome"/>
</dbReference>
<dbReference type="GO" id="GO:0005829">
    <property type="term" value="C:cytosol"/>
    <property type="evidence" value="ECO:0007669"/>
    <property type="project" value="TreeGrafter"/>
</dbReference>
<dbReference type="GO" id="GO:0005525">
    <property type="term" value="F:GTP binding"/>
    <property type="evidence" value="ECO:0007669"/>
    <property type="project" value="UniProtKB-UniRule"/>
</dbReference>
<dbReference type="GO" id="GO:0003924">
    <property type="term" value="F:GTPase activity"/>
    <property type="evidence" value="ECO:0007669"/>
    <property type="project" value="InterPro"/>
</dbReference>
<dbReference type="GO" id="GO:0097216">
    <property type="term" value="F:guanosine tetraphosphate binding"/>
    <property type="evidence" value="ECO:0007669"/>
    <property type="project" value="UniProtKB-ARBA"/>
</dbReference>
<dbReference type="GO" id="GO:0003746">
    <property type="term" value="F:translation elongation factor activity"/>
    <property type="evidence" value="ECO:0007669"/>
    <property type="project" value="UniProtKB-UniRule"/>
</dbReference>
<dbReference type="CDD" id="cd01884">
    <property type="entry name" value="EF_Tu"/>
    <property type="match status" value="1"/>
</dbReference>
<dbReference type="CDD" id="cd03697">
    <property type="entry name" value="EFTU_II"/>
    <property type="match status" value="1"/>
</dbReference>
<dbReference type="CDD" id="cd03707">
    <property type="entry name" value="EFTU_III"/>
    <property type="match status" value="1"/>
</dbReference>
<dbReference type="FunFam" id="2.40.30.10:FF:000001">
    <property type="entry name" value="Elongation factor Tu"/>
    <property type="match status" value="1"/>
</dbReference>
<dbReference type="FunFam" id="3.40.50.300:FF:000003">
    <property type="entry name" value="Elongation factor Tu"/>
    <property type="match status" value="1"/>
</dbReference>
<dbReference type="Gene3D" id="3.40.50.300">
    <property type="entry name" value="P-loop containing nucleotide triphosphate hydrolases"/>
    <property type="match status" value="1"/>
</dbReference>
<dbReference type="Gene3D" id="2.40.30.10">
    <property type="entry name" value="Translation factors"/>
    <property type="match status" value="2"/>
</dbReference>
<dbReference type="HAMAP" id="MF_00118_B">
    <property type="entry name" value="EF_Tu_B"/>
    <property type="match status" value="1"/>
</dbReference>
<dbReference type="InterPro" id="IPR041709">
    <property type="entry name" value="EF-Tu_GTP-bd"/>
</dbReference>
<dbReference type="InterPro" id="IPR050055">
    <property type="entry name" value="EF-Tu_GTPase"/>
</dbReference>
<dbReference type="InterPro" id="IPR004161">
    <property type="entry name" value="EFTu-like_2"/>
</dbReference>
<dbReference type="InterPro" id="IPR033720">
    <property type="entry name" value="EFTU_2"/>
</dbReference>
<dbReference type="InterPro" id="IPR031157">
    <property type="entry name" value="G_TR_CS"/>
</dbReference>
<dbReference type="InterPro" id="IPR027417">
    <property type="entry name" value="P-loop_NTPase"/>
</dbReference>
<dbReference type="InterPro" id="IPR005225">
    <property type="entry name" value="Small_GTP-bd"/>
</dbReference>
<dbReference type="InterPro" id="IPR000795">
    <property type="entry name" value="T_Tr_GTP-bd_dom"/>
</dbReference>
<dbReference type="InterPro" id="IPR009000">
    <property type="entry name" value="Transl_B-barrel_sf"/>
</dbReference>
<dbReference type="InterPro" id="IPR009001">
    <property type="entry name" value="Transl_elong_EF1A/Init_IF2_C"/>
</dbReference>
<dbReference type="InterPro" id="IPR004541">
    <property type="entry name" value="Transl_elong_EFTu/EF1A_bac/org"/>
</dbReference>
<dbReference type="InterPro" id="IPR004160">
    <property type="entry name" value="Transl_elong_EFTu/EF1A_C"/>
</dbReference>
<dbReference type="NCBIfam" id="TIGR00485">
    <property type="entry name" value="EF-Tu"/>
    <property type="match status" value="1"/>
</dbReference>
<dbReference type="NCBIfam" id="NF000766">
    <property type="entry name" value="PRK00049.1"/>
    <property type="match status" value="1"/>
</dbReference>
<dbReference type="NCBIfam" id="NF009372">
    <property type="entry name" value="PRK12735.1"/>
    <property type="match status" value="1"/>
</dbReference>
<dbReference type="NCBIfam" id="NF009373">
    <property type="entry name" value="PRK12736.1"/>
    <property type="match status" value="1"/>
</dbReference>
<dbReference type="NCBIfam" id="TIGR00231">
    <property type="entry name" value="small_GTP"/>
    <property type="match status" value="1"/>
</dbReference>
<dbReference type="PANTHER" id="PTHR43721:SF22">
    <property type="entry name" value="ELONGATION FACTOR TU, MITOCHONDRIAL"/>
    <property type="match status" value="1"/>
</dbReference>
<dbReference type="PANTHER" id="PTHR43721">
    <property type="entry name" value="ELONGATION FACTOR TU-RELATED"/>
    <property type="match status" value="1"/>
</dbReference>
<dbReference type="Pfam" id="PF00009">
    <property type="entry name" value="GTP_EFTU"/>
    <property type="match status" value="1"/>
</dbReference>
<dbReference type="Pfam" id="PF03144">
    <property type="entry name" value="GTP_EFTU_D2"/>
    <property type="match status" value="1"/>
</dbReference>
<dbReference type="Pfam" id="PF03143">
    <property type="entry name" value="GTP_EFTU_D3"/>
    <property type="match status" value="1"/>
</dbReference>
<dbReference type="PRINTS" id="PR00315">
    <property type="entry name" value="ELONGATNFCT"/>
</dbReference>
<dbReference type="SUPFAM" id="SSF50465">
    <property type="entry name" value="EF-Tu/eEF-1alpha/eIF2-gamma C-terminal domain"/>
    <property type="match status" value="1"/>
</dbReference>
<dbReference type="SUPFAM" id="SSF52540">
    <property type="entry name" value="P-loop containing nucleoside triphosphate hydrolases"/>
    <property type="match status" value="1"/>
</dbReference>
<dbReference type="SUPFAM" id="SSF50447">
    <property type="entry name" value="Translation proteins"/>
    <property type="match status" value="1"/>
</dbReference>
<dbReference type="PROSITE" id="PS00301">
    <property type="entry name" value="G_TR_1"/>
    <property type="match status" value="1"/>
</dbReference>
<dbReference type="PROSITE" id="PS51722">
    <property type="entry name" value="G_TR_2"/>
    <property type="match status" value="1"/>
</dbReference>
<reference key="1">
    <citation type="journal article" date="2005" name="Nucleic Acids Res.">
        <title>Genome dynamics and diversity of Shigella species, the etiologic agents of bacillary dysentery.</title>
        <authorList>
            <person name="Yang F."/>
            <person name="Yang J."/>
            <person name="Zhang X."/>
            <person name="Chen L."/>
            <person name="Jiang Y."/>
            <person name="Yan Y."/>
            <person name="Tang X."/>
            <person name="Wang J."/>
            <person name="Xiong Z."/>
            <person name="Dong J."/>
            <person name="Xue Y."/>
            <person name="Zhu Y."/>
            <person name="Xu X."/>
            <person name="Sun L."/>
            <person name="Chen S."/>
            <person name="Nie H."/>
            <person name="Peng J."/>
            <person name="Xu J."/>
            <person name="Wang Y."/>
            <person name="Yuan Z."/>
            <person name="Wen Y."/>
            <person name="Yao Z."/>
            <person name="Shen Y."/>
            <person name="Qiang B."/>
            <person name="Hou Y."/>
            <person name="Yu J."/>
            <person name="Jin Q."/>
        </authorList>
    </citation>
    <scope>NUCLEOTIDE SEQUENCE [LARGE SCALE GENOMIC DNA]</scope>
    <source>
        <strain>Ss046</strain>
    </source>
</reference>
<feature type="chain" id="PRO_0000337542" description="Elongation factor Tu 1">
    <location>
        <begin position="1"/>
        <end position="394"/>
    </location>
</feature>
<feature type="domain" description="tr-type G">
    <location>
        <begin position="10"/>
        <end position="204"/>
    </location>
</feature>
<feature type="region of interest" description="G1" evidence="1">
    <location>
        <begin position="19"/>
        <end position="26"/>
    </location>
</feature>
<feature type="region of interest" description="G2" evidence="1">
    <location>
        <begin position="60"/>
        <end position="64"/>
    </location>
</feature>
<feature type="region of interest" description="G3" evidence="1">
    <location>
        <begin position="81"/>
        <end position="84"/>
    </location>
</feature>
<feature type="region of interest" description="G4" evidence="1">
    <location>
        <begin position="136"/>
        <end position="139"/>
    </location>
</feature>
<feature type="region of interest" description="G5" evidence="1">
    <location>
        <begin position="174"/>
        <end position="176"/>
    </location>
</feature>
<feature type="binding site" evidence="2">
    <location>
        <begin position="19"/>
        <end position="26"/>
    </location>
    <ligand>
        <name>GTP</name>
        <dbReference type="ChEBI" id="CHEBI:37565"/>
    </ligand>
</feature>
<feature type="binding site" evidence="2">
    <location>
        <position position="26"/>
    </location>
    <ligand>
        <name>Mg(2+)</name>
        <dbReference type="ChEBI" id="CHEBI:18420"/>
    </ligand>
</feature>
<feature type="binding site" evidence="2">
    <location>
        <begin position="81"/>
        <end position="85"/>
    </location>
    <ligand>
        <name>GTP</name>
        <dbReference type="ChEBI" id="CHEBI:37565"/>
    </ligand>
</feature>
<feature type="binding site" evidence="2">
    <location>
        <begin position="136"/>
        <end position="139"/>
    </location>
    <ligand>
        <name>GTP</name>
        <dbReference type="ChEBI" id="CHEBI:37565"/>
    </ligand>
</feature>
<evidence type="ECO:0000250" key="1"/>
<evidence type="ECO:0000255" key="2">
    <source>
        <dbReference type="HAMAP-Rule" id="MF_00118"/>
    </source>
</evidence>
<name>EFTU1_SHISS</name>
<protein>
    <recommendedName>
        <fullName evidence="2">Elongation factor Tu 1</fullName>
        <shortName evidence="2">EF-Tu 1</shortName>
        <ecNumber evidence="2">3.6.5.3</ecNumber>
    </recommendedName>
</protein>
<sequence length="394" mass="43284">MSKEKFERTKPHVNVGTIGHVDHGKTTLTAAITTVLAKTYGGAARAFDQIDNAPEEKARGITINTSHVEYDTPTRHYAHVDCPGHADYVKNMITGAAQMDGAILVVAATDGPMPQTREHILLGRQVGVPYIIVFLNKCDMVDDEELLELVEMEVRELLSQYDFPGDDTPIVRGSALKALEGDAEWEAKILELAGFLDSYIPEPERAIDKPFLLPIEDVFSISGRGTVVTGRVERGIIKVGEEVEIVGIKETQKSTCTGVEMFRKLLDEGRAGENVGVLLRGIKREEIERGQVLAKPGTIKPHTKFESEVYILSKDEGGRHTPFFKGYRPQFYFRTTDVTGTIELPEGVEMVMPGDNIKMVVTLIHPIAMDDGLRFAIREGGRTVGAGVVAKVLG</sequence>
<gene>
    <name evidence="2" type="primary">tuf1</name>
    <name type="synonym">tufA</name>
    <name type="ordered locus">SSON_3469</name>
</gene>
<comment type="function">
    <text evidence="2">GTP hydrolase that promotes the GTP-dependent binding of aminoacyl-tRNA to the A-site of ribosomes during protein biosynthesis.</text>
</comment>
<comment type="catalytic activity">
    <reaction evidence="2">
        <text>GTP + H2O = GDP + phosphate + H(+)</text>
        <dbReference type="Rhea" id="RHEA:19669"/>
        <dbReference type="ChEBI" id="CHEBI:15377"/>
        <dbReference type="ChEBI" id="CHEBI:15378"/>
        <dbReference type="ChEBI" id="CHEBI:37565"/>
        <dbReference type="ChEBI" id="CHEBI:43474"/>
        <dbReference type="ChEBI" id="CHEBI:58189"/>
        <dbReference type="EC" id="3.6.5.3"/>
    </reaction>
    <physiologicalReaction direction="left-to-right" evidence="2">
        <dbReference type="Rhea" id="RHEA:19670"/>
    </physiologicalReaction>
</comment>
<comment type="subunit">
    <text evidence="2">Monomer.</text>
</comment>
<comment type="subcellular location">
    <subcellularLocation>
        <location evidence="2">Cytoplasm</location>
    </subcellularLocation>
</comment>
<comment type="similarity">
    <text evidence="2">Belongs to the TRAFAC class translation factor GTPase superfamily. Classic translation factor GTPase family. EF-Tu/EF-1A subfamily.</text>
</comment>
<proteinExistence type="inferred from homology"/>
<organism>
    <name type="scientific">Shigella sonnei (strain Ss046)</name>
    <dbReference type="NCBI Taxonomy" id="300269"/>
    <lineage>
        <taxon>Bacteria</taxon>
        <taxon>Pseudomonadati</taxon>
        <taxon>Pseudomonadota</taxon>
        <taxon>Gammaproteobacteria</taxon>
        <taxon>Enterobacterales</taxon>
        <taxon>Enterobacteriaceae</taxon>
        <taxon>Shigella</taxon>
    </lineage>
</organism>
<accession>Q3YWT3</accession>
<keyword id="KW-0963">Cytoplasm</keyword>
<keyword id="KW-0251">Elongation factor</keyword>
<keyword id="KW-0342">GTP-binding</keyword>
<keyword id="KW-0378">Hydrolase</keyword>
<keyword id="KW-0460">Magnesium</keyword>
<keyword id="KW-0479">Metal-binding</keyword>
<keyword id="KW-0547">Nucleotide-binding</keyword>
<keyword id="KW-0648">Protein biosynthesis</keyword>
<keyword id="KW-1185">Reference proteome</keyword>